<dbReference type="EMBL" id="X17020">
    <property type="protein sequence ID" value="CAA34886.1"/>
    <property type="molecule type" value="mRNA"/>
</dbReference>
<dbReference type="SMR" id="P69322"/>
<dbReference type="OrthoDB" id="1340217at2759"/>
<dbReference type="GO" id="GO:0005737">
    <property type="term" value="C:cytoplasm"/>
    <property type="evidence" value="ECO:0007669"/>
    <property type="project" value="UniProtKB-SubCell"/>
</dbReference>
<dbReference type="GO" id="GO:0005634">
    <property type="term" value="C:nucleus"/>
    <property type="evidence" value="ECO:0007669"/>
    <property type="project" value="UniProtKB-SubCell"/>
</dbReference>
<dbReference type="GO" id="GO:0003729">
    <property type="term" value="F:mRNA binding"/>
    <property type="evidence" value="ECO:0007669"/>
    <property type="project" value="UniProtKB-ARBA"/>
</dbReference>
<dbReference type="CDD" id="cd01803">
    <property type="entry name" value="Ubl_ubiquitin"/>
    <property type="match status" value="5"/>
</dbReference>
<dbReference type="FunFam" id="3.10.20.90:FF:000016">
    <property type="entry name" value="Polyubiquitin 3"/>
    <property type="match status" value="5"/>
</dbReference>
<dbReference type="Gene3D" id="3.10.20.90">
    <property type="entry name" value="Phosphatidylinositol 3-kinase Catalytic Subunit, Chain A, domain 1"/>
    <property type="match status" value="5"/>
</dbReference>
<dbReference type="InterPro" id="IPR000626">
    <property type="entry name" value="Ubiquitin-like_dom"/>
</dbReference>
<dbReference type="InterPro" id="IPR029071">
    <property type="entry name" value="Ubiquitin-like_domsf"/>
</dbReference>
<dbReference type="InterPro" id="IPR019954">
    <property type="entry name" value="Ubiquitin_CS"/>
</dbReference>
<dbReference type="InterPro" id="IPR019956">
    <property type="entry name" value="Ubiquitin_dom"/>
</dbReference>
<dbReference type="InterPro" id="IPR050158">
    <property type="entry name" value="Ubiquitin_ubiquitin-like"/>
</dbReference>
<dbReference type="PANTHER" id="PTHR10666">
    <property type="entry name" value="UBIQUITIN"/>
    <property type="match status" value="1"/>
</dbReference>
<dbReference type="Pfam" id="PF00240">
    <property type="entry name" value="ubiquitin"/>
    <property type="match status" value="5"/>
</dbReference>
<dbReference type="PRINTS" id="PR00348">
    <property type="entry name" value="UBIQUITIN"/>
</dbReference>
<dbReference type="SMART" id="SM00213">
    <property type="entry name" value="UBQ"/>
    <property type="match status" value="5"/>
</dbReference>
<dbReference type="SUPFAM" id="SSF54236">
    <property type="entry name" value="Ubiquitin-like"/>
    <property type="match status" value="5"/>
</dbReference>
<dbReference type="PROSITE" id="PS00299">
    <property type="entry name" value="UBIQUITIN_1"/>
    <property type="match status" value="5"/>
</dbReference>
<dbReference type="PROSITE" id="PS50053">
    <property type="entry name" value="UBIQUITIN_2"/>
    <property type="match status" value="5"/>
</dbReference>
<proteinExistence type="evidence at transcript level"/>
<reference key="1">
    <citation type="journal article" date="1989" name="Nucleic Acids Res.">
        <title>Nucleotide sequence of a full length cDNA clone encoding a polyubiquitin gene from Pisum sativum.</title>
        <authorList>
            <person name="Watts F.Z."/>
            <person name="Moore A.L."/>
        </authorList>
    </citation>
    <scope>NUCLEOTIDE SEQUENCE [MRNA]</scope>
</reference>
<protein>
    <recommendedName>
        <fullName>Polyubiquitin</fullName>
    </recommendedName>
    <component>
        <recommendedName>
            <fullName>Ubiquitin</fullName>
        </recommendedName>
    </component>
</protein>
<comment type="function">
    <text evidence="1">Ubiquitin exists either covalently attached to another protein, or free (unanchored). When covalently bound, it is conjugated to target proteins via an isopeptide bond either as a monomer (monoubiquitin), a polymer linked via different Lys residues of the ubiquitin (polyubiquitin chains) or a linear polymer linked via the initiator Met of the ubiquitin (linear polyubiquitin chains). Polyubiquitin chains, when attached to a target protein, have different functions depending on the Lys residue of the ubiquitin that is linked: Lys-48-linked is involved in protein degradation via the proteasome. Linear polymer chains formed via attachment by the initiator Met lead to cell signaling. Ubiquitin is usually conjugated to Lys residues of target proteins, however, in rare cases, conjugation to Cys or Ser residues has been observed. When polyubiquitin is free (unanchored-polyubiquitin), it also has distinct roles, such as in activation of protein kinases, and in signaling (By similarity).</text>
</comment>
<comment type="subcellular location">
    <subcellularLocation>
        <location evidence="1">Cytoplasm</location>
    </subcellularLocation>
    <subcellularLocation>
        <location evidence="1">Nucleus</location>
    </subcellularLocation>
</comment>
<comment type="miscellaneous">
    <text>For the sake of clarity sequence features are annotated only for the first chain, and are not repeated for each of the following chains.</text>
</comment>
<comment type="similarity">
    <text evidence="3">Belongs to the ubiquitin family.</text>
</comment>
<gene>
    <name type="primary">PU1</name>
</gene>
<evidence type="ECO:0000250" key="1"/>
<evidence type="ECO:0000255" key="2">
    <source>
        <dbReference type="PROSITE-ProRule" id="PRU00214"/>
    </source>
</evidence>
<evidence type="ECO:0000305" key="3"/>
<feature type="chain" id="PRO_0000114849" description="Ubiquitin">
    <location>
        <begin position="1"/>
        <end position="76"/>
    </location>
</feature>
<feature type="chain" id="PRO_0000396408" description="Ubiquitin">
    <location>
        <begin position="77"/>
        <end position="152"/>
    </location>
</feature>
<feature type="chain" id="PRO_0000396409" description="Ubiquitin">
    <location>
        <begin position="153"/>
        <end position="228"/>
    </location>
</feature>
<feature type="chain" id="PRO_0000396410" description="Ubiquitin">
    <location>
        <begin position="229"/>
        <end position="304"/>
    </location>
</feature>
<feature type="chain" id="PRO_0000396411" description="Ubiquitin">
    <location>
        <begin position="305"/>
        <end position="380"/>
    </location>
</feature>
<feature type="propeptide" id="PRO_0000396412">
    <location>
        <position position="381"/>
    </location>
</feature>
<feature type="domain" description="Ubiquitin-like 1" evidence="2">
    <location>
        <begin position="1"/>
        <end position="76"/>
    </location>
</feature>
<feature type="domain" description="Ubiquitin-like 2" evidence="2">
    <location>
        <begin position="77"/>
        <end position="152"/>
    </location>
</feature>
<feature type="domain" description="Ubiquitin-like 3" evidence="2">
    <location>
        <begin position="153"/>
        <end position="228"/>
    </location>
</feature>
<feature type="domain" description="Ubiquitin-like 4" evidence="2">
    <location>
        <begin position="229"/>
        <end position="304"/>
    </location>
</feature>
<feature type="domain" description="Ubiquitin-like 5" evidence="2">
    <location>
        <begin position="305"/>
        <end position="380"/>
    </location>
</feature>
<feature type="cross-link" description="Glycyl lysine isopeptide (Lys-Gly) (interchain with G-Cter in ubiquitin)" evidence="1">
    <location>
        <position position="48"/>
    </location>
</feature>
<feature type="cross-link" description="Glycyl lysine isopeptide (Gly-Lys) (interchain with K-? in acceptor proteins)" evidence="2">
    <location>
        <position position="76"/>
    </location>
</feature>
<accession>P69322</accession>
<accession>O82079</accession>
<accession>P03993</accession>
<sequence>MQIFVKTLTGKTITLEVESSDTIDNVKAKIQDKEGIPPDQQRLIFAGKQLEDGRTLADYNIQKESTLHLVLRLRGGMQIFVKTLTGKTITLEVESSDTIDNVKAKIQDKEGIPPDQQRLIFAGKQLEDGRTLADYNIQKESTLHLVLRLRGGMQIFVKTLTGKTITLEVESSDTIDNVKAKIQDKEGIPPDQQRLIFAGKQLEDGRTLADYNIQKESTLHLVLRLRGGMQIFVKTLTGKTITLEVESSDTIDNVKAKIQDKEGIPPDQQRLIFAGKQLEDGRTLADYNIQKESTLHLVLRLRGGMQIFVKTLTGKTITLEVESSDTIDNVKAKIQDKEGIPPDQQRLIFAGKQLEDGRTLADYNIQKESTLHLVLRLRGGF</sequence>
<keyword id="KW-0963">Cytoplasm</keyword>
<keyword id="KW-1017">Isopeptide bond</keyword>
<keyword id="KW-0539">Nucleus</keyword>
<keyword id="KW-0677">Repeat</keyword>
<keyword id="KW-0832">Ubl conjugation</keyword>
<name>UBIQP_PEA</name>
<organism>
    <name type="scientific">Pisum sativum</name>
    <name type="common">Garden pea</name>
    <name type="synonym">Lathyrus oleraceus</name>
    <dbReference type="NCBI Taxonomy" id="3888"/>
    <lineage>
        <taxon>Eukaryota</taxon>
        <taxon>Viridiplantae</taxon>
        <taxon>Streptophyta</taxon>
        <taxon>Embryophyta</taxon>
        <taxon>Tracheophyta</taxon>
        <taxon>Spermatophyta</taxon>
        <taxon>Magnoliopsida</taxon>
        <taxon>eudicotyledons</taxon>
        <taxon>Gunneridae</taxon>
        <taxon>Pentapetalae</taxon>
        <taxon>rosids</taxon>
        <taxon>fabids</taxon>
        <taxon>Fabales</taxon>
        <taxon>Fabaceae</taxon>
        <taxon>Papilionoideae</taxon>
        <taxon>50 kb inversion clade</taxon>
        <taxon>NPAAA clade</taxon>
        <taxon>Hologalegina</taxon>
        <taxon>IRL clade</taxon>
        <taxon>Fabeae</taxon>
        <taxon>Pisum</taxon>
    </lineage>
</organism>